<proteinExistence type="evidence at protein level"/>
<name>ACP_AZOBR</name>
<comment type="function">
    <text>Carrier of the growing fatty acid chain in fatty acid biosynthesis.</text>
</comment>
<comment type="pathway">
    <text evidence="1">Lipid metabolism; fatty acid biosynthesis.</text>
</comment>
<comment type="subcellular location">
    <subcellularLocation>
        <location evidence="1">Cytoplasm</location>
    </subcellularLocation>
</comment>
<comment type="PTM">
    <text>4'-phosphopantetheine is transferred from CoA to a specific serine of apo-ACP by AcpS. This modification is essential for activity because fatty acids are bound in thioester linkage to the sulfhydryl of the prosthetic group.</text>
</comment>
<comment type="similarity">
    <text evidence="1">Belongs to the acyl carrier protein (ACP) family.</text>
</comment>
<protein>
    <recommendedName>
        <fullName evidence="1">Acyl carrier protein</fullName>
        <shortName evidence="1">ACP</shortName>
    </recommendedName>
</protein>
<evidence type="ECO:0000255" key="1">
    <source>
        <dbReference type="HAMAP-Rule" id="MF_01217"/>
    </source>
</evidence>
<evidence type="ECO:0000255" key="2">
    <source>
        <dbReference type="PROSITE-ProRule" id="PRU00258"/>
    </source>
</evidence>
<feature type="initiator methionine" description="Removed">
    <location>
        <position position="1"/>
    </location>
</feature>
<feature type="chain" id="PRO_0000180095" description="Acyl carrier protein">
    <location>
        <begin position="2"/>
        <end position="79"/>
    </location>
</feature>
<feature type="domain" description="Carrier" evidence="2">
    <location>
        <begin position="2"/>
        <end position="77"/>
    </location>
</feature>
<feature type="modified residue" description="O-(pantetheine 4'-phosphoryl)serine" evidence="2">
    <location>
        <position position="37"/>
    </location>
</feature>
<keyword id="KW-0963">Cytoplasm</keyword>
<keyword id="KW-0903">Direct protein sequencing</keyword>
<keyword id="KW-0275">Fatty acid biosynthesis</keyword>
<keyword id="KW-0276">Fatty acid metabolism</keyword>
<keyword id="KW-0444">Lipid biosynthesis</keyword>
<keyword id="KW-0443">Lipid metabolism</keyword>
<keyword id="KW-0596">Phosphopantetheine</keyword>
<keyword id="KW-0597">Phosphoprotein</keyword>
<organism>
    <name type="scientific">Azospirillum brasilense</name>
    <dbReference type="NCBI Taxonomy" id="192"/>
    <lineage>
        <taxon>Bacteria</taxon>
        <taxon>Pseudomonadati</taxon>
        <taxon>Pseudomonadota</taxon>
        <taxon>Alphaproteobacteria</taxon>
        <taxon>Rhodospirillales</taxon>
        <taxon>Azospirillaceae</taxon>
        <taxon>Azospirillum</taxon>
    </lineage>
</organism>
<accession>P94123</accession>
<reference key="1">
    <citation type="journal article" date="1996" name="Microbiology">
        <title>Acyl carrier protein of Azospirillum brasilense: properties of the purified protein and sequencing of the corresponding gene, acpP.</title>
        <authorList>
            <person name="Maiti M.K."/>
            <person name="Ghosh S."/>
        </authorList>
    </citation>
    <scope>NUCLEOTIDE SEQUENCE [GENOMIC DNA]</scope>
    <scope>PARTIAL PROTEIN SEQUENCE</scope>
    <source>
        <strain>RG</strain>
    </source>
</reference>
<sequence>MSDVAERVKKIVVDHLGVEESKVTENASFIDDLGADSLDTVELVMAFEEEFGCEIPDDAAEKILTVKDAIDFIKANAAA</sequence>
<gene>
    <name evidence="1" type="primary">acpP</name>
    <name type="synonym">acpF</name>
</gene>
<dbReference type="EMBL" id="X82399">
    <property type="protein sequence ID" value="CAA57794.1"/>
    <property type="molecule type" value="Genomic_DNA"/>
</dbReference>
<dbReference type="RefSeq" id="WP_014240383.1">
    <property type="nucleotide sequence ID" value="NZ_WFKD01000127.1"/>
</dbReference>
<dbReference type="SMR" id="P94123"/>
<dbReference type="OrthoDB" id="9804551at2"/>
<dbReference type="UniPathway" id="UPA00094"/>
<dbReference type="GO" id="GO:0005829">
    <property type="term" value="C:cytosol"/>
    <property type="evidence" value="ECO:0007669"/>
    <property type="project" value="TreeGrafter"/>
</dbReference>
<dbReference type="GO" id="GO:0016020">
    <property type="term" value="C:membrane"/>
    <property type="evidence" value="ECO:0007669"/>
    <property type="project" value="GOC"/>
</dbReference>
<dbReference type="GO" id="GO:0000035">
    <property type="term" value="F:acyl binding"/>
    <property type="evidence" value="ECO:0007669"/>
    <property type="project" value="TreeGrafter"/>
</dbReference>
<dbReference type="GO" id="GO:0000036">
    <property type="term" value="F:acyl carrier activity"/>
    <property type="evidence" value="ECO:0007669"/>
    <property type="project" value="UniProtKB-UniRule"/>
</dbReference>
<dbReference type="GO" id="GO:0009245">
    <property type="term" value="P:lipid A biosynthetic process"/>
    <property type="evidence" value="ECO:0007669"/>
    <property type="project" value="TreeGrafter"/>
</dbReference>
<dbReference type="FunFam" id="1.10.1200.10:FF:000001">
    <property type="entry name" value="Acyl carrier protein"/>
    <property type="match status" value="1"/>
</dbReference>
<dbReference type="Gene3D" id="1.10.1200.10">
    <property type="entry name" value="ACP-like"/>
    <property type="match status" value="1"/>
</dbReference>
<dbReference type="HAMAP" id="MF_01217">
    <property type="entry name" value="Acyl_carrier"/>
    <property type="match status" value="1"/>
</dbReference>
<dbReference type="InterPro" id="IPR003231">
    <property type="entry name" value="ACP"/>
</dbReference>
<dbReference type="InterPro" id="IPR036736">
    <property type="entry name" value="ACP-like_sf"/>
</dbReference>
<dbReference type="InterPro" id="IPR009081">
    <property type="entry name" value="PP-bd_ACP"/>
</dbReference>
<dbReference type="InterPro" id="IPR006162">
    <property type="entry name" value="Ppantetheine_attach_site"/>
</dbReference>
<dbReference type="NCBIfam" id="TIGR00517">
    <property type="entry name" value="acyl_carrier"/>
    <property type="match status" value="1"/>
</dbReference>
<dbReference type="NCBIfam" id="NF002148">
    <property type="entry name" value="PRK00982.1-2"/>
    <property type="match status" value="1"/>
</dbReference>
<dbReference type="NCBIfam" id="NF002149">
    <property type="entry name" value="PRK00982.1-3"/>
    <property type="match status" value="1"/>
</dbReference>
<dbReference type="NCBIfam" id="NF002150">
    <property type="entry name" value="PRK00982.1-4"/>
    <property type="match status" value="1"/>
</dbReference>
<dbReference type="NCBIfam" id="NF002151">
    <property type="entry name" value="PRK00982.1-5"/>
    <property type="match status" value="1"/>
</dbReference>
<dbReference type="PANTHER" id="PTHR20863">
    <property type="entry name" value="ACYL CARRIER PROTEIN"/>
    <property type="match status" value="1"/>
</dbReference>
<dbReference type="PANTHER" id="PTHR20863:SF76">
    <property type="entry name" value="CARRIER DOMAIN-CONTAINING PROTEIN"/>
    <property type="match status" value="1"/>
</dbReference>
<dbReference type="Pfam" id="PF00550">
    <property type="entry name" value="PP-binding"/>
    <property type="match status" value="1"/>
</dbReference>
<dbReference type="SUPFAM" id="SSF47336">
    <property type="entry name" value="ACP-like"/>
    <property type="match status" value="1"/>
</dbReference>
<dbReference type="PROSITE" id="PS50075">
    <property type="entry name" value="CARRIER"/>
    <property type="match status" value="1"/>
</dbReference>
<dbReference type="PROSITE" id="PS00012">
    <property type="entry name" value="PHOSPHOPANTETHEINE"/>
    <property type="match status" value="1"/>
</dbReference>